<sequence length="215" mass="24611">MGRRPARCYRYCKNKPYPKSRFCRGVPDPKIRIFDLGRKKAKVDEFPLCAHMVSDEYEQLSSEALEAARICANKYMVKTCGKDGFHIRVRLHPFHVIRINKMLSCAGADRLQTGMRGAFGKPQGTVARVHIGQVIMSVRTKAQNKEHVIEALRRAKFKFPGRQKIHVSKKYGFTKFNTCDFDNMLAEKRLIPDGCGVKYIPSRGPLSRWKALHAN</sequence>
<evidence type="ECO:0000250" key="1">
    <source>
        <dbReference type="UniProtKB" id="P27635"/>
    </source>
</evidence>
<evidence type="ECO:0000250" key="2">
    <source>
        <dbReference type="UniProtKB" id="Q6ZWV3"/>
    </source>
</evidence>
<evidence type="ECO:0000269" key="3">
    <source>
    </source>
</evidence>
<evidence type="ECO:0000303" key="4">
    <source ref="1"/>
</evidence>
<evidence type="ECO:0000305" key="5"/>
<evidence type="ECO:0000305" key="6">
    <source>
    </source>
</evidence>
<evidence type="ECO:0000312" key="7">
    <source>
        <dbReference type="EMBL" id="AAH45950.1"/>
    </source>
</evidence>
<gene>
    <name evidence="1" type="primary">rpl10</name>
    <name evidence="4" type="synonym">QM</name>
</gene>
<accession>Q7ZV96</accession>
<comment type="function">
    <text evidence="3 6">Component of the large ribosomal subunit (Probable). Plays a role in the formation of actively translating ribosomes (PubMed:25316788). Plays a role in the embryonic brain development (PubMed:25316788).</text>
</comment>
<comment type="subunit">
    <text evidence="6">Component of the large ribosomal subunit.</text>
</comment>
<comment type="subcellular location">
    <subcellularLocation>
        <location evidence="2">Cytoplasm</location>
    </subcellularLocation>
</comment>
<comment type="developmental stage">
    <text evidence="3">Expressed ubiquitously in the embryos. Strongly expressed at the midbrain and hindbrain boundary at 2 days post-fertilization (dpf).</text>
</comment>
<comment type="disruption phenotype">
    <text evidence="3">Morpholino knockdown of the protein decreases head size, but not body length at 2 days post-fertilization (dpf) (PubMed:25316788). Show decreased formation of actively translating ribosomes (PubMed:25316788).</text>
</comment>
<comment type="similarity">
    <text evidence="5">Belongs to the universal ribosomal protein uL16 family.</text>
</comment>
<name>RL10_DANRE</name>
<dbReference type="EMBL" id="AY763500">
    <property type="protein sequence ID" value="AAV34163.1"/>
    <property type="molecule type" value="mRNA"/>
</dbReference>
<dbReference type="EMBL" id="CR352234">
    <property type="status" value="NOT_ANNOTATED_CDS"/>
    <property type="molecule type" value="Genomic_DNA"/>
</dbReference>
<dbReference type="EMBL" id="BC045950">
    <property type="protein sequence ID" value="AAH45950.1"/>
    <property type="molecule type" value="mRNA"/>
</dbReference>
<dbReference type="EMBL" id="BC164313">
    <property type="protein sequence ID" value="AAI64313.1"/>
    <property type="molecule type" value="mRNA"/>
</dbReference>
<dbReference type="RefSeq" id="NP_956321.1">
    <property type="nucleotide sequence ID" value="NM_200027.1"/>
</dbReference>
<dbReference type="RefSeq" id="XP_017209012.1">
    <property type="nucleotide sequence ID" value="XM_017353523.1"/>
</dbReference>
<dbReference type="RefSeq" id="XP_068072792.1">
    <property type="nucleotide sequence ID" value="XM_068216691.1"/>
</dbReference>
<dbReference type="PDB" id="7OYA">
    <property type="method" value="EM"/>
    <property type="resolution" value="3.20 A"/>
    <property type="chains" value="I1=1-215"/>
</dbReference>
<dbReference type="PDB" id="7OYB">
    <property type="method" value="EM"/>
    <property type="resolution" value="2.40 A"/>
    <property type="chains" value="I1=1-215"/>
</dbReference>
<dbReference type="PDBsum" id="7OYA"/>
<dbReference type="PDBsum" id="7OYB"/>
<dbReference type="EMDB" id="EMD-13111"/>
<dbReference type="EMDB" id="EMD-13112"/>
<dbReference type="SMR" id="Q7ZV96"/>
<dbReference type="FunCoup" id="Q7ZV96">
    <property type="interactions" value="1441"/>
</dbReference>
<dbReference type="STRING" id="7955.ENSDARP00000120909"/>
<dbReference type="PaxDb" id="7955-ENSDARP00000119262"/>
<dbReference type="Ensembl" id="ENSDART00000032744">
    <property type="protein sequence ID" value="ENSDARP00000036951"/>
    <property type="gene ID" value="ENSDARG00000025581"/>
</dbReference>
<dbReference type="Ensembl" id="ENSDART00000131860">
    <property type="protein sequence ID" value="ENSDARP00000120909"/>
    <property type="gene ID" value="ENSDARG00000025581"/>
</dbReference>
<dbReference type="Ensembl" id="ENSDART00000142072">
    <property type="protein sequence ID" value="ENSDARP00000119262"/>
    <property type="gene ID" value="ENSDARG00000025581"/>
</dbReference>
<dbReference type="Ensembl" id="ENSDART00000182714">
    <property type="protein sequence ID" value="ENSDARP00000145934"/>
    <property type="gene ID" value="ENSDARG00000117015"/>
</dbReference>
<dbReference type="Ensembl" id="ENSDART00000192800">
    <property type="protein sequence ID" value="ENSDARP00000149077"/>
    <property type="gene ID" value="ENSDARG00000115128"/>
</dbReference>
<dbReference type="GeneID" id="336712"/>
<dbReference type="KEGG" id="dre:336712"/>
<dbReference type="AGR" id="ZFIN:ZDB-GENE-030131-8656"/>
<dbReference type="CTD" id="6134"/>
<dbReference type="ZFIN" id="ZDB-GENE-030131-8656">
    <property type="gene designation" value="rpl10"/>
</dbReference>
<dbReference type="eggNOG" id="KOG0857">
    <property type="taxonomic scope" value="Eukaryota"/>
</dbReference>
<dbReference type="HOGENOM" id="CLU_084051_0_1_1"/>
<dbReference type="InParanoid" id="Q7ZV96"/>
<dbReference type="OMA" id="HHVIREN"/>
<dbReference type="OrthoDB" id="10258869at2759"/>
<dbReference type="PhylomeDB" id="Q7ZV96"/>
<dbReference type="TreeFam" id="TF300082"/>
<dbReference type="Reactome" id="R-DRE-156827">
    <property type="pathway name" value="L13a-mediated translational silencing of Ceruloplasmin expression"/>
</dbReference>
<dbReference type="Reactome" id="R-DRE-1799339">
    <property type="pathway name" value="SRP-dependent cotranslational protein targeting to membrane"/>
</dbReference>
<dbReference type="Reactome" id="R-DRE-72689">
    <property type="pathway name" value="Formation of a pool of free 40S subunits"/>
</dbReference>
<dbReference type="Reactome" id="R-DRE-975956">
    <property type="pathway name" value="Nonsense Mediated Decay (NMD) independent of the Exon Junction Complex (EJC)"/>
</dbReference>
<dbReference type="Reactome" id="R-DRE-975957">
    <property type="pathway name" value="Nonsense Mediated Decay (NMD) enhanced by the Exon Junction Complex (EJC)"/>
</dbReference>
<dbReference type="PRO" id="PR:Q7ZV96"/>
<dbReference type="Proteomes" id="UP000000437">
    <property type="component" value="Alternate scaffold 23"/>
</dbReference>
<dbReference type="Proteomes" id="UP000000437">
    <property type="component" value="Chromosome 23"/>
</dbReference>
<dbReference type="Bgee" id="ENSDARG00000025581">
    <property type="expression patterns" value="Expressed in granulocyte and 25 other cell types or tissues"/>
</dbReference>
<dbReference type="ExpressionAtlas" id="Q7ZV96">
    <property type="expression patterns" value="baseline"/>
</dbReference>
<dbReference type="GO" id="GO:0022625">
    <property type="term" value="C:cytosolic large ribosomal subunit"/>
    <property type="evidence" value="ECO:0000318"/>
    <property type="project" value="GO_Central"/>
</dbReference>
<dbReference type="GO" id="GO:0003735">
    <property type="term" value="F:structural constituent of ribosome"/>
    <property type="evidence" value="ECO:0000318"/>
    <property type="project" value="GO_Central"/>
</dbReference>
<dbReference type="GO" id="GO:0045182">
    <property type="term" value="F:translation regulator activity"/>
    <property type="evidence" value="ECO:0000315"/>
    <property type="project" value="UniProtKB"/>
</dbReference>
<dbReference type="GO" id="GO:0007420">
    <property type="term" value="P:brain development"/>
    <property type="evidence" value="ECO:0000315"/>
    <property type="project" value="ZFIN"/>
</dbReference>
<dbReference type="GO" id="GO:1990403">
    <property type="term" value="P:embryonic brain development"/>
    <property type="evidence" value="ECO:0000315"/>
    <property type="project" value="UniProtKB"/>
</dbReference>
<dbReference type="GO" id="GO:0006417">
    <property type="term" value="P:regulation of translation"/>
    <property type="evidence" value="ECO:0000315"/>
    <property type="project" value="UniProtKB"/>
</dbReference>
<dbReference type="GO" id="GO:0006412">
    <property type="term" value="P:translation"/>
    <property type="evidence" value="ECO:0000318"/>
    <property type="project" value="GO_Central"/>
</dbReference>
<dbReference type="CDD" id="cd01433">
    <property type="entry name" value="Ribosomal_L16_L10e"/>
    <property type="match status" value="1"/>
</dbReference>
<dbReference type="FunFam" id="3.30.60.300:FF:000001">
    <property type="entry name" value="60S ribosomal protein L10"/>
    <property type="match status" value="1"/>
</dbReference>
<dbReference type="FunFam" id="3.90.1170.10:FF:000002">
    <property type="entry name" value="60S ribosomal protein L10"/>
    <property type="match status" value="1"/>
</dbReference>
<dbReference type="Gene3D" id="3.30.60.300">
    <property type="match status" value="1"/>
</dbReference>
<dbReference type="Gene3D" id="3.90.1170.10">
    <property type="entry name" value="Ribosomal protein L10e/L16"/>
    <property type="match status" value="1"/>
</dbReference>
<dbReference type="InterPro" id="IPR047873">
    <property type="entry name" value="Ribosomal_uL16"/>
</dbReference>
<dbReference type="InterPro" id="IPR018255">
    <property type="entry name" value="Ribosomal_uL16_CS_euk_arc"/>
</dbReference>
<dbReference type="InterPro" id="IPR016180">
    <property type="entry name" value="Ribosomal_uL16_dom"/>
</dbReference>
<dbReference type="InterPro" id="IPR001197">
    <property type="entry name" value="Ribosomal_uL16_euk_arch"/>
</dbReference>
<dbReference type="InterPro" id="IPR036920">
    <property type="entry name" value="Ribosomal_uL16_sf"/>
</dbReference>
<dbReference type="NCBIfam" id="NF003239">
    <property type="entry name" value="PRK04199.1-4"/>
    <property type="match status" value="1"/>
</dbReference>
<dbReference type="NCBIfam" id="TIGR00279">
    <property type="entry name" value="uL16_euk_arch"/>
    <property type="match status" value="1"/>
</dbReference>
<dbReference type="PANTHER" id="PTHR11726">
    <property type="entry name" value="60S RIBOSOMAL PROTEIN L10"/>
    <property type="match status" value="1"/>
</dbReference>
<dbReference type="Pfam" id="PF00252">
    <property type="entry name" value="Ribosomal_L16"/>
    <property type="match status" value="1"/>
</dbReference>
<dbReference type="PIRSF" id="PIRSF005590">
    <property type="entry name" value="Ribosomal_L10"/>
    <property type="match status" value="1"/>
</dbReference>
<dbReference type="SUPFAM" id="SSF54686">
    <property type="entry name" value="Ribosomal protein L16p/L10e"/>
    <property type="match status" value="1"/>
</dbReference>
<dbReference type="PROSITE" id="PS01257">
    <property type="entry name" value="RIBOSOMAL_L10E"/>
    <property type="match status" value="1"/>
</dbReference>
<organism evidence="7">
    <name type="scientific">Danio rerio</name>
    <name type="common">Zebrafish</name>
    <name type="synonym">Brachydanio rerio</name>
    <dbReference type="NCBI Taxonomy" id="7955"/>
    <lineage>
        <taxon>Eukaryota</taxon>
        <taxon>Metazoa</taxon>
        <taxon>Chordata</taxon>
        <taxon>Craniata</taxon>
        <taxon>Vertebrata</taxon>
        <taxon>Euteleostomi</taxon>
        <taxon>Actinopterygii</taxon>
        <taxon>Neopterygii</taxon>
        <taxon>Teleostei</taxon>
        <taxon>Ostariophysi</taxon>
        <taxon>Cypriniformes</taxon>
        <taxon>Danionidae</taxon>
        <taxon>Danioninae</taxon>
        <taxon>Danio</taxon>
    </lineage>
</organism>
<protein>
    <recommendedName>
        <fullName evidence="5">Large ribosomal subunit protein uL16</fullName>
    </recommendedName>
    <alternativeName>
        <fullName evidence="5">60S ribosomal protein L10</fullName>
    </alternativeName>
    <alternativeName>
        <fullName evidence="4">Protein QM</fullName>
    </alternativeName>
    <alternativeName>
        <fullName evidence="1">Ribosomal protein L10</fullName>
    </alternativeName>
</protein>
<proteinExistence type="evidence at protein level"/>
<reference key="1">
    <citation type="submission" date="2004-09" db="EMBL/GenBank/DDBJ databases">
        <title>Electronic cloning and digital differential display analysis of Danio rerio QM gene by EST database searching.</title>
        <authorList>
            <person name="Jin H."/>
            <person name="Shao J."/>
            <person name="Xiang L."/>
        </authorList>
    </citation>
    <scope>NUCLEOTIDE SEQUENCE [MRNA]</scope>
</reference>
<reference key="2">
    <citation type="journal article" date="2013" name="Nature">
        <title>The zebrafish reference genome sequence and its relationship to the human genome.</title>
        <authorList>
            <person name="Howe K."/>
            <person name="Clark M.D."/>
            <person name="Torroja C.F."/>
            <person name="Torrance J."/>
            <person name="Berthelot C."/>
            <person name="Muffato M."/>
            <person name="Collins J.E."/>
            <person name="Humphray S."/>
            <person name="McLaren K."/>
            <person name="Matthews L."/>
            <person name="McLaren S."/>
            <person name="Sealy I."/>
            <person name="Caccamo M."/>
            <person name="Churcher C."/>
            <person name="Scott C."/>
            <person name="Barrett J.C."/>
            <person name="Koch R."/>
            <person name="Rauch G.J."/>
            <person name="White S."/>
            <person name="Chow W."/>
            <person name="Kilian B."/>
            <person name="Quintais L.T."/>
            <person name="Guerra-Assuncao J.A."/>
            <person name="Zhou Y."/>
            <person name="Gu Y."/>
            <person name="Yen J."/>
            <person name="Vogel J.H."/>
            <person name="Eyre T."/>
            <person name="Redmond S."/>
            <person name="Banerjee R."/>
            <person name="Chi J."/>
            <person name="Fu B."/>
            <person name="Langley E."/>
            <person name="Maguire S.F."/>
            <person name="Laird G.K."/>
            <person name="Lloyd D."/>
            <person name="Kenyon E."/>
            <person name="Donaldson S."/>
            <person name="Sehra H."/>
            <person name="Almeida-King J."/>
            <person name="Loveland J."/>
            <person name="Trevanion S."/>
            <person name="Jones M."/>
            <person name="Quail M."/>
            <person name="Willey D."/>
            <person name="Hunt A."/>
            <person name="Burton J."/>
            <person name="Sims S."/>
            <person name="McLay K."/>
            <person name="Plumb B."/>
            <person name="Davis J."/>
            <person name="Clee C."/>
            <person name="Oliver K."/>
            <person name="Clark R."/>
            <person name="Riddle C."/>
            <person name="Elliot D."/>
            <person name="Threadgold G."/>
            <person name="Harden G."/>
            <person name="Ware D."/>
            <person name="Begum S."/>
            <person name="Mortimore B."/>
            <person name="Kerry G."/>
            <person name="Heath P."/>
            <person name="Phillimore B."/>
            <person name="Tracey A."/>
            <person name="Corby N."/>
            <person name="Dunn M."/>
            <person name="Johnson C."/>
            <person name="Wood J."/>
            <person name="Clark S."/>
            <person name="Pelan S."/>
            <person name="Griffiths G."/>
            <person name="Smith M."/>
            <person name="Glithero R."/>
            <person name="Howden P."/>
            <person name="Barker N."/>
            <person name="Lloyd C."/>
            <person name="Stevens C."/>
            <person name="Harley J."/>
            <person name="Holt K."/>
            <person name="Panagiotidis G."/>
            <person name="Lovell J."/>
            <person name="Beasley H."/>
            <person name="Henderson C."/>
            <person name="Gordon D."/>
            <person name="Auger K."/>
            <person name="Wright D."/>
            <person name="Collins J."/>
            <person name="Raisen C."/>
            <person name="Dyer L."/>
            <person name="Leung K."/>
            <person name="Robertson L."/>
            <person name="Ambridge K."/>
            <person name="Leongamornlert D."/>
            <person name="McGuire S."/>
            <person name="Gilderthorp R."/>
            <person name="Griffiths C."/>
            <person name="Manthravadi D."/>
            <person name="Nichol S."/>
            <person name="Barker G."/>
            <person name="Whitehead S."/>
            <person name="Kay M."/>
            <person name="Brown J."/>
            <person name="Murnane C."/>
            <person name="Gray E."/>
            <person name="Humphries M."/>
            <person name="Sycamore N."/>
            <person name="Barker D."/>
            <person name="Saunders D."/>
            <person name="Wallis J."/>
            <person name="Babbage A."/>
            <person name="Hammond S."/>
            <person name="Mashreghi-Mohammadi M."/>
            <person name="Barr L."/>
            <person name="Martin S."/>
            <person name="Wray P."/>
            <person name="Ellington A."/>
            <person name="Matthews N."/>
            <person name="Ellwood M."/>
            <person name="Woodmansey R."/>
            <person name="Clark G."/>
            <person name="Cooper J."/>
            <person name="Tromans A."/>
            <person name="Grafham D."/>
            <person name="Skuce C."/>
            <person name="Pandian R."/>
            <person name="Andrews R."/>
            <person name="Harrison E."/>
            <person name="Kimberley A."/>
            <person name="Garnett J."/>
            <person name="Fosker N."/>
            <person name="Hall R."/>
            <person name="Garner P."/>
            <person name="Kelly D."/>
            <person name="Bird C."/>
            <person name="Palmer S."/>
            <person name="Gehring I."/>
            <person name="Berger A."/>
            <person name="Dooley C.M."/>
            <person name="Ersan-Urun Z."/>
            <person name="Eser C."/>
            <person name="Geiger H."/>
            <person name="Geisler M."/>
            <person name="Karotki L."/>
            <person name="Kirn A."/>
            <person name="Konantz J."/>
            <person name="Konantz M."/>
            <person name="Oberlander M."/>
            <person name="Rudolph-Geiger S."/>
            <person name="Teucke M."/>
            <person name="Lanz C."/>
            <person name="Raddatz G."/>
            <person name="Osoegawa K."/>
            <person name="Zhu B."/>
            <person name="Rapp A."/>
            <person name="Widaa S."/>
            <person name="Langford C."/>
            <person name="Yang F."/>
            <person name="Schuster S.C."/>
            <person name="Carter N.P."/>
            <person name="Harrow J."/>
            <person name="Ning Z."/>
            <person name="Herrero J."/>
            <person name="Searle S.M."/>
            <person name="Enright A."/>
            <person name="Geisler R."/>
            <person name="Plasterk R.H."/>
            <person name="Lee C."/>
            <person name="Westerfield M."/>
            <person name="de Jong P.J."/>
            <person name="Zon L.I."/>
            <person name="Postlethwait J.H."/>
            <person name="Nusslein-Volhard C."/>
            <person name="Hubbard T.J."/>
            <person name="Roest Crollius H."/>
            <person name="Rogers J."/>
            <person name="Stemple D.L."/>
        </authorList>
    </citation>
    <scope>NUCLEOTIDE SEQUENCE [LARGE SCALE GENOMIC DNA]</scope>
    <source>
        <strain>Tuebingen</strain>
    </source>
</reference>
<reference key="3">
    <citation type="submission" date="2003-01" db="EMBL/GenBank/DDBJ databases">
        <authorList>
            <consortium name="NIH - Zebrafish Gene Collection (ZGC) project"/>
        </authorList>
    </citation>
    <scope>NUCLEOTIDE SEQUENCE [LARGE SCALE MRNA]</scope>
    <source>
        <tissue>Embryo</tissue>
    </source>
</reference>
<reference key="4">
    <citation type="journal article" date="2014" name="Genetics">
        <title>A novel ribosomopathy caused by dysfunction of RPL10 disrupts neurodevelopment and causes X-linked microcephaly in humans.</title>
        <authorList>
            <person name="Brooks S.S."/>
            <person name="Wall A.L."/>
            <person name="Golzio C."/>
            <person name="Reid D.W."/>
            <person name="Kondyles A."/>
            <person name="Willer J.R."/>
            <person name="Botti C."/>
            <person name="Nicchitta C.V."/>
            <person name="Katsanis N."/>
            <person name="Davis E.E."/>
        </authorList>
    </citation>
    <scope>FUNCTION</scope>
    <scope>DEVELOPMENTAL STAGE</scope>
    <scope>DISRUPTION PHENOTYPE</scope>
</reference>
<keyword id="KW-0002">3D-structure</keyword>
<keyword id="KW-0963">Cytoplasm</keyword>
<keyword id="KW-0217">Developmental protein</keyword>
<keyword id="KW-1185">Reference proteome</keyword>
<keyword id="KW-0687">Ribonucleoprotein</keyword>
<keyword id="KW-0689">Ribosomal protein</keyword>
<feature type="chain" id="PRO_0000442353" description="Large ribosomal subunit protein uL16">
    <location>
        <begin position="1"/>
        <end position="215"/>
    </location>
</feature>